<evidence type="ECO:0000255" key="1">
    <source>
        <dbReference type="HAMAP-Rule" id="MF_00210"/>
    </source>
</evidence>
<sequence>MESLTLQPIARVDGTINLPGSKSVSNRALLLAALAHGKTVLTNLLDSDDVRHMLNALTALGVSYTLSADRTRCEIIGNGGPLHAEGALELFLGNAGTAMRPLAAALCLGSNDIVLTGEPRMKERPIGHLVDALRLGGAKITYLEQENYPPLRLQGGFTGGNVDVDGSVSSQFLTALLMTAPLAPEDTVIRIKGDLVSKPYIDITLNLMKTFGVEIENQHYQQFVVKGGQSYQSPGTYLVEGDASSASYFLAAAAIKGGTVKVTGIGRNSMQGDIRFADVLEKMGATICWGDDYISCTRGELNAIDMDMNHIPDAAMTIATAALFAKGTTTLRNIYNWRVKETDRLFAMATELRKVGAEVEEGHDYIRITPPEKLNFAEIATYNDHRMAMCFSLVALSDTPVTILDPKCTAKTFPDYFEQLARISQAA</sequence>
<comment type="function">
    <text evidence="1">Catalyzes the transfer of the enolpyruvyl moiety of phosphoenolpyruvate (PEP) to the 5-hydroxyl of shikimate-3-phosphate (S3P) to produce enolpyruvyl shikimate-3-phosphate and inorganic phosphate.</text>
</comment>
<comment type="catalytic activity">
    <reaction evidence="1">
        <text>3-phosphoshikimate + phosphoenolpyruvate = 5-O-(1-carboxyvinyl)-3-phosphoshikimate + phosphate</text>
        <dbReference type="Rhea" id="RHEA:21256"/>
        <dbReference type="ChEBI" id="CHEBI:43474"/>
        <dbReference type="ChEBI" id="CHEBI:57701"/>
        <dbReference type="ChEBI" id="CHEBI:58702"/>
        <dbReference type="ChEBI" id="CHEBI:145989"/>
        <dbReference type="EC" id="2.5.1.19"/>
    </reaction>
    <physiologicalReaction direction="left-to-right" evidence="1">
        <dbReference type="Rhea" id="RHEA:21257"/>
    </physiologicalReaction>
</comment>
<comment type="pathway">
    <text evidence="1">Metabolic intermediate biosynthesis; chorismate biosynthesis; chorismate from D-erythrose 4-phosphate and phosphoenolpyruvate: step 6/7.</text>
</comment>
<comment type="subunit">
    <text evidence="1">Monomer.</text>
</comment>
<comment type="subcellular location">
    <subcellularLocation>
        <location evidence="1">Cytoplasm</location>
    </subcellularLocation>
</comment>
<comment type="similarity">
    <text evidence="1">Belongs to the EPSP synthase family.</text>
</comment>
<proteinExistence type="inferred from homology"/>
<dbReference type="EC" id="2.5.1.19" evidence="1"/>
<dbReference type="EMBL" id="CP000948">
    <property type="protein sequence ID" value="ACB02108.1"/>
    <property type="molecule type" value="Genomic_DNA"/>
</dbReference>
<dbReference type="RefSeq" id="WP_000445231.1">
    <property type="nucleotide sequence ID" value="NC_010473.1"/>
</dbReference>
<dbReference type="SMR" id="B1X848"/>
<dbReference type="GeneID" id="93776510"/>
<dbReference type="KEGG" id="ecd:ECDH10B_0978"/>
<dbReference type="HOGENOM" id="CLU_024321_0_0_6"/>
<dbReference type="UniPathway" id="UPA00053">
    <property type="reaction ID" value="UER00089"/>
</dbReference>
<dbReference type="GO" id="GO:0005737">
    <property type="term" value="C:cytoplasm"/>
    <property type="evidence" value="ECO:0007669"/>
    <property type="project" value="UniProtKB-SubCell"/>
</dbReference>
<dbReference type="GO" id="GO:0003866">
    <property type="term" value="F:3-phosphoshikimate 1-carboxyvinyltransferase activity"/>
    <property type="evidence" value="ECO:0007669"/>
    <property type="project" value="UniProtKB-UniRule"/>
</dbReference>
<dbReference type="GO" id="GO:0008652">
    <property type="term" value="P:amino acid biosynthetic process"/>
    <property type="evidence" value="ECO:0007669"/>
    <property type="project" value="UniProtKB-KW"/>
</dbReference>
<dbReference type="GO" id="GO:0009073">
    <property type="term" value="P:aromatic amino acid family biosynthetic process"/>
    <property type="evidence" value="ECO:0007669"/>
    <property type="project" value="UniProtKB-KW"/>
</dbReference>
<dbReference type="GO" id="GO:0009423">
    <property type="term" value="P:chorismate biosynthetic process"/>
    <property type="evidence" value="ECO:0007669"/>
    <property type="project" value="UniProtKB-UniRule"/>
</dbReference>
<dbReference type="CDD" id="cd01554">
    <property type="entry name" value="EPT-like"/>
    <property type="match status" value="1"/>
</dbReference>
<dbReference type="FunFam" id="3.65.10.10:FF:000003">
    <property type="entry name" value="3-phosphoshikimate 1-carboxyvinyltransferase"/>
    <property type="match status" value="1"/>
</dbReference>
<dbReference type="FunFam" id="3.65.10.10:FF:000004">
    <property type="entry name" value="3-phosphoshikimate 1-carboxyvinyltransferase"/>
    <property type="match status" value="1"/>
</dbReference>
<dbReference type="Gene3D" id="3.65.10.10">
    <property type="entry name" value="Enolpyruvate transferase domain"/>
    <property type="match status" value="2"/>
</dbReference>
<dbReference type="HAMAP" id="MF_00210">
    <property type="entry name" value="EPSP_synth"/>
    <property type="match status" value="1"/>
</dbReference>
<dbReference type="InterPro" id="IPR001986">
    <property type="entry name" value="Enolpyruvate_Tfrase_dom"/>
</dbReference>
<dbReference type="InterPro" id="IPR036968">
    <property type="entry name" value="Enolpyruvate_Tfrase_sf"/>
</dbReference>
<dbReference type="InterPro" id="IPR006264">
    <property type="entry name" value="EPSP_synthase"/>
</dbReference>
<dbReference type="InterPro" id="IPR023193">
    <property type="entry name" value="EPSP_synthase_CS"/>
</dbReference>
<dbReference type="InterPro" id="IPR013792">
    <property type="entry name" value="RNA3'P_cycl/enolpyr_Trfase_a/b"/>
</dbReference>
<dbReference type="NCBIfam" id="TIGR01356">
    <property type="entry name" value="aroA"/>
    <property type="match status" value="1"/>
</dbReference>
<dbReference type="PANTHER" id="PTHR21090">
    <property type="entry name" value="AROM/DEHYDROQUINATE SYNTHASE"/>
    <property type="match status" value="1"/>
</dbReference>
<dbReference type="PANTHER" id="PTHR21090:SF5">
    <property type="entry name" value="PENTAFUNCTIONAL AROM POLYPEPTIDE"/>
    <property type="match status" value="1"/>
</dbReference>
<dbReference type="Pfam" id="PF00275">
    <property type="entry name" value="EPSP_synthase"/>
    <property type="match status" value="1"/>
</dbReference>
<dbReference type="PIRSF" id="PIRSF000505">
    <property type="entry name" value="EPSPS"/>
    <property type="match status" value="1"/>
</dbReference>
<dbReference type="SUPFAM" id="SSF55205">
    <property type="entry name" value="EPT/RTPC-like"/>
    <property type="match status" value="1"/>
</dbReference>
<dbReference type="PROSITE" id="PS00104">
    <property type="entry name" value="EPSP_SYNTHASE_1"/>
    <property type="match status" value="1"/>
</dbReference>
<dbReference type="PROSITE" id="PS00885">
    <property type="entry name" value="EPSP_SYNTHASE_2"/>
    <property type="match status" value="1"/>
</dbReference>
<gene>
    <name evidence="1" type="primary">aroA</name>
    <name type="ordered locus">ECDH10B_0978</name>
</gene>
<feature type="chain" id="PRO_1000099700" description="3-phosphoshikimate 1-carboxyvinyltransferase">
    <location>
        <begin position="1"/>
        <end position="427"/>
    </location>
</feature>
<feature type="active site" description="Proton acceptor" evidence="1">
    <location>
        <position position="313"/>
    </location>
</feature>
<feature type="binding site" evidence="1">
    <location>
        <position position="22"/>
    </location>
    <ligand>
        <name>3-phosphoshikimate</name>
        <dbReference type="ChEBI" id="CHEBI:145989"/>
    </ligand>
</feature>
<feature type="binding site" evidence="1">
    <location>
        <position position="22"/>
    </location>
    <ligand>
        <name>phosphoenolpyruvate</name>
        <dbReference type="ChEBI" id="CHEBI:58702"/>
    </ligand>
</feature>
<feature type="binding site" evidence="1">
    <location>
        <position position="23"/>
    </location>
    <ligand>
        <name>3-phosphoshikimate</name>
        <dbReference type="ChEBI" id="CHEBI:145989"/>
    </ligand>
</feature>
<feature type="binding site" evidence="1">
    <location>
        <position position="27"/>
    </location>
    <ligand>
        <name>3-phosphoshikimate</name>
        <dbReference type="ChEBI" id="CHEBI:145989"/>
    </ligand>
</feature>
<feature type="binding site" evidence="1">
    <location>
        <position position="96"/>
    </location>
    <ligand>
        <name>phosphoenolpyruvate</name>
        <dbReference type="ChEBI" id="CHEBI:58702"/>
    </ligand>
</feature>
<feature type="binding site" evidence="1">
    <location>
        <position position="124"/>
    </location>
    <ligand>
        <name>phosphoenolpyruvate</name>
        <dbReference type="ChEBI" id="CHEBI:58702"/>
    </ligand>
</feature>
<feature type="binding site" evidence="1">
    <location>
        <position position="169"/>
    </location>
    <ligand>
        <name>3-phosphoshikimate</name>
        <dbReference type="ChEBI" id="CHEBI:145989"/>
    </ligand>
</feature>
<feature type="binding site" evidence="1">
    <location>
        <position position="170"/>
    </location>
    <ligand>
        <name>3-phosphoshikimate</name>
        <dbReference type="ChEBI" id="CHEBI:145989"/>
    </ligand>
</feature>
<feature type="binding site" evidence="1">
    <location>
        <position position="171"/>
    </location>
    <ligand>
        <name>3-phosphoshikimate</name>
        <dbReference type="ChEBI" id="CHEBI:145989"/>
    </ligand>
</feature>
<feature type="binding site" evidence="1">
    <location>
        <position position="171"/>
    </location>
    <ligand>
        <name>phosphoenolpyruvate</name>
        <dbReference type="ChEBI" id="CHEBI:58702"/>
    </ligand>
</feature>
<feature type="binding site" evidence="1">
    <location>
        <position position="197"/>
    </location>
    <ligand>
        <name>3-phosphoshikimate</name>
        <dbReference type="ChEBI" id="CHEBI:145989"/>
    </ligand>
</feature>
<feature type="binding site" evidence="1">
    <location>
        <position position="313"/>
    </location>
    <ligand>
        <name>3-phosphoshikimate</name>
        <dbReference type="ChEBI" id="CHEBI:145989"/>
    </ligand>
</feature>
<feature type="binding site" evidence="1">
    <location>
        <position position="336"/>
    </location>
    <ligand>
        <name>3-phosphoshikimate</name>
        <dbReference type="ChEBI" id="CHEBI:145989"/>
    </ligand>
</feature>
<feature type="binding site" evidence="1">
    <location>
        <position position="340"/>
    </location>
    <ligand>
        <name>3-phosphoshikimate</name>
        <dbReference type="ChEBI" id="CHEBI:145989"/>
    </ligand>
</feature>
<feature type="binding site" evidence="1">
    <location>
        <position position="344"/>
    </location>
    <ligand>
        <name>phosphoenolpyruvate</name>
        <dbReference type="ChEBI" id="CHEBI:58702"/>
    </ligand>
</feature>
<feature type="binding site" evidence="1">
    <location>
        <position position="386"/>
    </location>
    <ligand>
        <name>phosphoenolpyruvate</name>
        <dbReference type="ChEBI" id="CHEBI:58702"/>
    </ligand>
</feature>
<feature type="binding site" evidence="1">
    <location>
        <position position="411"/>
    </location>
    <ligand>
        <name>phosphoenolpyruvate</name>
        <dbReference type="ChEBI" id="CHEBI:58702"/>
    </ligand>
</feature>
<protein>
    <recommendedName>
        <fullName evidence="1">3-phosphoshikimate 1-carboxyvinyltransferase</fullName>
        <ecNumber evidence="1">2.5.1.19</ecNumber>
    </recommendedName>
    <alternativeName>
        <fullName evidence="1">5-enolpyruvylshikimate-3-phosphate synthase</fullName>
        <shortName evidence="1">EPSP synthase</shortName>
        <shortName evidence="1">EPSPS</shortName>
    </alternativeName>
</protein>
<organism>
    <name type="scientific">Escherichia coli (strain K12 / DH10B)</name>
    <dbReference type="NCBI Taxonomy" id="316385"/>
    <lineage>
        <taxon>Bacteria</taxon>
        <taxon>Pseudomonadati</taxon>
        <taxon>Pseudomonadota</taxon>
        <taxon>Gammaproteobacteria</taxon>
        <taxon>Enterobacterales</taxon>
        <taxon>Enterobacteriaceae</taxon>
        <taxon>Escherichia</taxon>
    </lineage>
</organism>
<reference key="1">
    <citation type="journal article" date="2008" name="J. Bacteriol.">
        <title>The complete genome sequence of Escherichia coli DH10B: insights into the biology of a laboratory workhorse.</title>
        <authorList>
            <person name="Durfee T."/>
            <person name="Nelson R."/>
            <person name="Baldwin S."/>
            <person name="Plunkett G. III"/>
            <person name="Burland V."/>
            <person name="Mau B."/>
            <person name="Petrosino J.F."/>
            <person name="Qin X."/>
            <person name="Muzny D.M."/>
            <person name="Ayele M."/>
            <person name="Gibbs R.A."/>
            <person name="Csorgo B."/>
            <person name="Posfai G."/>
            <person name="Weinstock G.M."/>
            <person name="Blattner F.R."/>
        </authorList>
    </citation>
    <scope>NUCLEOTIDE SEQUENCE [LARGE SCALE GENOMIC DNA]</scope>
    <source>
        <strain>K12 / DH10B</strain>
    </source>
</reference>
<keyword id="KW-0028">Amino-acid biosynthesis</keyword>
<keyword id="KW-0057">Aromatic amino acid biosynthesis</keyword>
<keyword id="KW-0963">Cytoplasm</keyword>
<keyword id="KW-0808">Transferase</keyword>
<name>AROA_ECODH</name>
<accession>B1X848</accession>